<name>MCSB_STAAC</name>
<proteinExistence type="inferred from homology"/>
<keyword id="KW-0067">ATP-binding</keyword>
<keyword id="KW-0418">Kinase</keyword>
<keyword id="KW-0547">Nucleotide-binding</keyword>
<keyword id="KW-0808">Transferase</keyword>
<organism>
    <name type="scientific">Staphylococcus aureus (strain COL)</name>
    <dbReference type="NCBI Taxonomy" id="93062"/>
    <lineage>
        <taxon>Bacteria</taxon>
        <taxon>Bacillati</taxon>
        <taxon>Bacillota</taxon>
        <taxon>Bacilli</taxon>
        <taxon>Bacillales</taxon>
        <taxon>Staphylococcaceae</taxon>
        <taxon>Staphylococcus</taxon>
    </lineage>
</organism>
<protein>
    <recommendedName>
        <fullName evidence="1">Protein-arginine kinase</fullName>
        <ecNumber evidence="1">2.7.14.1</ecNumber>
    </recommendedName>
</protein>
<gene>
    <name evidence="1" type="primary">mcsB</name>
    <name type="ordered locus">SACOL0569</name>
</gene>
<dbReference type="EC" id="2.7.14.1" evidence="1"/>
<dbReference type="EMBL" id="CP000046">
    <property type="protein sequence ID" value="AAW37681.1"/>
    <property type="molecule type" value="Genomic_DNA"/>
</dbReference>
<dbReference type="RefSeq" id="WP_000149503.1">
    <property type="nucleotide sequence ID" value="NZ_JBGOFO010000009.1"/>
</dbReference>
<dbReference type="SMR" id="Q5HIF0"/>
<dbReference type="KEGG" id="sac:SACOL0569"/>
<dbReference type="HOGENOM" id="CLU_066591_1_0_9"/>
<dbReference type="Proteomes" id="UP000000530">
    <property type="component" value="Chromosome"/>
</dbReference>
<dbReference type="GO" id="GO:0005615">
    <property type="term" value="C:extracellular space"/>
    <property type="evidence" value="ECO:0007669"/>
    <property type="project" value="TreeGrafter"/>
</dbReference>
<dbReference type="GO" id="GO:0005524">
    <property type="term" value="F:ATP binding"/>
    <property type="evidence" value="ECO:0007669"/>
    <property type="project" value="UniProtKB-KW"/>
</dbReference>
<dbReference type="GO" id="GO:0004111">
    <property type="term" value="F:creatine kinase activity"/>
    <property type="evidence" value="ECO:0007669"/>
    <property type="project" value="InterPro"/>
</dbReference>
<dbReference type="GO" id="GO:0004672">
    <property type="term" value="F:protein kinase activity"/>
    <property type="evidence" value="ECO:0007669"/>
    <property type="project" value="UniProtKB-UniRule"/>
</dbReference>
<dbReference type="GO" id="GO:0046314">
    <property type="term" value="P:phosphocreatine biosynthetic process"/>
    <property type="evidence" value="ECO:0007669"/>
    <property type="project" value="InterPro"/>
</dbReference>
<dbReference type="CDD" id="cd07930">
    <property type="entry name" value="bacterial_phosphagen_kinase"/>
    <property type="match status" value="1"/>
</dbReference>
<dbReference type="FunFam" id="3.30.590.10:FF:000007">
    <property type="entry name" value="Protein-arginine kinase"/>
    <property type="match status" value="1"/>
</dbReference>
<dbReference type="Gene3D" id="3.30.590.10">
    <property type="entry name" value="Glutamine synthetase/guanido kinase, catalytic domain"/>
    <property type="match status" value="1"/>
</dbReference>
<dbReference type="HAMAP" id="MF_00602">
    <property type="entry name" value="Prot_Arg_kinase"/>
    <property type="match status" value="1"/>
</dbReference>
<dbReference type="InterPro" id="IPR023660">
    <property type="entry name" value="Arg_Kinase"/>
</dbReference>
<dbReference type="InterPro" id="IPR000749">
    <property type="entry name" value="ATP-guanido_PTrfase"/>
</dbReference>
<dbReference type="InterPro" id="IPR022415">
    <property type="entry name" value="ATP-guanido_PTrfase_AS"/>
</dbReference>
<dbReference type="InterPro" id="IPR022414">
    <property type="entry name" value="ATP-guanido_PTrfase_cat"/>
</dbReference>
<dbReference type="InterPro" id="IPR014746">
    <property type="entry name" value="Gln_synth/guanido_kin_cat_dom"/>
</dbReference>
<dbReference type="NCBIfam" id="NF002193">
    <property type="entry name" value="PRK01059.1-3"/>
    <property type="match status" value="1"/>
</dbReference>
<dbReference type="PANTHER" id="PTHR11547:SF38">
    <property type="entry name" value="ARGININE KINASE 1-RELATED"/>
    <property type="match status" value="1"/>
</dbReference>
<dbReference type="PANTHER" id="PTHR11547">
    <property type="entry name" value="ARGININE OR CREATINE KINASE"/>
    <property type="match status" value="1"/>
</dbReference>
<dbReference type="Pfam" id="PF00217">
    <property type="entry name" value="ATP-gua_Ptrans"/>
    <property type="match status" value="1"/>
</dbReference>
<dbReference type="SUPFAM" id="SSF55931">
    <property type="entry name" value="Glutamine synthetase/guanido kinase"/>
    <property type="match status" value="1"/>
</dbReference>
<dbReference type="PROSITE" id="PS00112">
    <property type="entry name" value="PHOSPHAGEN_KINASE"/>
    <property type="match status" value="1"/>
</dbReference>
<dbReference type="PROSITE" id="PS51510">
    <property type="entry name" value="PHOSPHAGEN_KINASE_C"/>
    <property type="match status" value="1"/>
</dbReference>
<comment type="function">
    <text evidence="1">Catalyzes the specific phosphorylation of arginine residues in proteins.</text>
</comment>
<comment type="catalytic activity">
    <reaction evidence="1">
        <text>L-arginyl-[protein] + ATP = N(omega)-phospho-L-arginyl-[protein] + ADP + H(+)</text>
        <dbReference type="Rhea" id="RHEA:43384"/>
        <dbReference type="Rhea" id="RHEA-COMP:10532"/>
        <dbReference type="Rhea" id="RHEA-COMP:10533"/>
        <dbReference type="ChEBI" id="CHEBI:15378"/>
        <dbReference type="ChEBI" id="CHEBI:29965"/>
        <dbReference type="ChEBI" id="CHEBI:30616"/>
        <dbReference type="ChEBI" id="CHEBI:83226"/>
        <dbReference type="ChEBI" id="CHEBI:456216"/>
        <dbReference type="EC" id="2.7.14.1"/>
    </reaction>
</comment>
<comment type="similarity">
    <text evidence="1">Belongs to the ATP:guanido phosphotransferase family.</text>
</comment>
<sequence>MTHNIHDNISQWMKSNEETPIVMSSRIRLARNLENHVHPLMYATENDGFRVINEVQDALPNFELMRLDQMDQQSKMKMVAKHLISPELIKQPAAAVLVNDDESLSVMINEEDHIRIQAMGTDTTLQALYNQASSIDDELDRSLDISYDEQLGYLTTCPTNIGTGMRASVMLHLPGLSIMKRMTRIAQTINRFGYTIRGIYGEGSQVYGHTYQVSNQLTLGKSELEIIETLTEVVNQIIHEEKQIRQKLDTYNQLETQDRVFRSLGILQNCRMITMEEASYRLSEVKLGIDLNYIELQNFKFNELMVAIQSPFLLDEEDDKSVKEKRADILREHIK</sequence>
<evidence type="ECO:0000255" key="1">
    <source>
        <dbReference type="HAMAP-Rule" id="MF_00602"/>
    </source>
</evidence>
<reference key="1">
    <citation type="journal article" date="2005" name="J. Bacteriol.">
        <title>Insights on evolution of virulence and resistance from the complete genome analysis of an early methicillin-resistant Staphylococcus aureus strain and a biofilm-producing methicillin-resistant Staphylococcus epidermidis strain.</title>
        <authorList>
            <person name="Gill S.R."/>
            <person name="Fouts D.E."/>
            <person name="Archer G.L."/>
            <person name="Mongodin E.F."/>
            <person name="DeBoy R.T."/>
            <person name="Ravel J."/>
            <person name="Paulsen I.T."/>
            <person name="Kolonay J.F."/>
            <person name="Brinkac L.M."/>
            <person name="Beanan M.J."/>
            <person name="Dodson R.J."/>
            <person name="Daugherty S.C."/>
            <person name="Madupu R."/>
            <person name="Angiuoli S.V."/>
            <person name="Durkin A.S."/>
            <person name="Haft D.H."/>
            <person name="Vamathevan J.J."/>
            <person name="Khouri H."/>
            <person name="Utterback T.R."/>
            <person name="Lee C."/>
            <person name="Dimitrov G."/>
            <person name="Jiang L."/>
            <person name="Qin H."/>
            <person name="Weidman J."/>
            <person name="Tran K."/>
            <person name="Kang K.H."/>
            <person name="Hance I.R."/>
            <person name="Nelson K.E."/>
            <person name="Fraser C.M."/>
        </authorList>
    </citation>
    <scope>NUCLEOTIDE SEQUENCE [LARGE SCALE GENOMIC DNA]</scope>
    <source>
        <strain>COL</strain>
    </source>
</reference>
<accession>Q5HIF0</accession>
<feature type="chain" id="PRO_0000212028" description="Protein-arginine kinase">
    <location>
        <begin position="1"/>
        <end position="335"/>
    </location>
</feature>
<feature type="domain" description="Phosphagen kinase C-terminal" evidence="1">
    <location>
        <begin position="21"/>
        <end position="244"/>
    </location>
</feature>
<feature type="binding site" evidence="1">
    <location>
        <begin position="24"/>
        <end position="28"/>
    </location>
    <ligand>
        <name>ATP</name>
        <dbReference type="ChEBI" id="CHEBI:30616"/>
    </ligand>
</feature>
<feature type="binding site" evidence="1">
    <location>
        <position position="82"/>
    </location>
    <ligand>
        <name>ATP</name>
        <dbReference type="ChEBI" id="CHEBI:30616"/>
    </ligand>
</feature>
<feature type="binding site" evidence="1">
    <location>
        <position position="115"/>
    </location>
    <ligand>
        <name>ATP</name>
        <dbReference type="ChEBI" id="CHEBI:30616"/>
    </ligand>
</feature>
<feature type="binding site" evidence="1">
    <location>
        <begin position="166"/>
        <end position="170"/>
    </location>
    <ligand>
        <name>ATP</name>
        <dbReference type="ChEBI" id="CHEBI:30616"/>
    </ligand>
</feature>
<feature type="binding site" evidence="1">
    <location>
        <begin position="197"/>
        <end position="202"/>
    </location>
    <ligand>
        <name>ATP</name>
        <dbReference type="ChEBI" id="CHEBI:30616"/>
    </ligand>
</feature>